<name>RRF_ECOLC</name>
<dbReference type="EMBL" id="CP000946">
    <property type="protein sequence ID" value="ACA79102.1"/>
    <property type="molecule type" value="Genomic_DNA"/>
</dbReference>
<dbReference type="RefSeq" id="WP_000622418.1">
    <property type="nucleotide sequence ID" value="NZ_MTFT01000035.1"/>
</dbReference>
<dbReference type="BMRB" id="B1IQG9"/>
<dbReference type="SMR" id="B1IQG9"/>
<dbReference type="GeneID" id="93777253"/>
<dbReference type="KEGG" id="ecl:EcolC_3488"/>
<dbReference type="HOGENOM" id="CLU_073981_2_1_6"/>
<dbReference type="GO" id="GO:0005829">
    <property type="term" value="C:cytosol"/>
    <property type="evidence" value="ECO:0007669"/>
    <property type="project" value="GOC"/>
</dbReference>
<dbReference type="GO" id="GO:0043023">
    <property type="term" value="F:ribosomal large subunit binding"/>
    <property type="evidence" value="ECO:0007669"/>
    <property type="project" value="TreeGrafter"/>
</dbReference>
<dbReference type="GO" id="GO:0002184">
    <property type="term" value="P:cytoplasmic translational termination"/>
    <property type="evidence" value="ECO:0007669"/>
    <property type="project" value="TreeGrafter"/>
</dbReference>
<dbReference type="CDD" id="cd00520">
    <property type="entry name" value="RRF"/>
    <property type="match status" value="1"/>
</dbReference>
<dbReference type="FunFam" id="1.10.132.20:FF:000001">
    <property type="entry name" value="Ribosome-recycling factor"/>
    <property type="match status" value="1"/>
</dbReference>
<dbReference type="FunFam" id="3.30.1360.40:FF:000001">
    <property type="entry name" value="Ribosome-recycling factor"/>
    <property type="match status" value="1"/>
</dbReference>
<dbReference type="Gene3D" id="3.30.1360.40">
    <property type="match status" value="1"/>
</dbReference>
<dbReference type="Gene3D" id="1.10.132.20">
    <property type="entry name" value="Ribosome-recycling factor"/>
    <property type="match status" value="1"/>
</dbReference>
<dbReference type="HAMAP" id="MF_00040">
    <property type="entry name" value="RRF"/>
    <property type="match status" value="1"/>
</dbReference>
<dbReference type="InterPro" id="IPR002661">
    <property type="entry name" value="Ribosome_recyc_fac"/>
</dbReference>
<dbReference type="InterPro" id="IPR023584">
    <property type="entry name" value="Ribosome_recyc_fac_dom"/>
</dbReference>
<dbReference type="InterPro" id="IPR036191">
    <property type="entry name" value="RRF_sf"/>
</dbReference>
<dbReference type="NCBIfam" id="TIGR00496">
    <property type="entry name" value="frr"/>
    <property type="match status" value="1"/>
</dbReference>
<dbReference type="PANTHER" id="PTHR20982:SF3">
    <property type="entry name" value="MITOCHONDRIAL RIBOSOME RECYCLING FACTOR PSEUDO 1"/>
    <property type="match status" value="1"/>
</dbReference>
<dbReference type="PANTHER" id="PTHR20982">
    <property type="entry name" value="RIBOSOME RECYCLING FACTOR"/>
    <property type="match status" value="1"/>
</dbReference>
<dbReference type="Pfam" id="PF01765">
    <property type="entry name" value="RRF"/>
    <property type="match status" value="1"/>
</dbReference>
<dbReference type="SUPFAM" id="SSF55194">
    <property type="entry name" value="Ribosome recycling factor, RRF"/>
    <property type="match status" value="1"/>
</dbReference>
<proteinExistence type="inferred from homology"/>
<organism>
    <name type="scientific">Escherichia coli (strain ATCC 8739 / DSM 1576 / NBRC 3972 / NCIMB 8545 / WDCM 00012 / Crooks)</name>
    <dbReference type="NCBI Taxonomy" id="481805"/>
    <lineage>
        <taxon>Bacteria</taxon>
        <taxon>Pseudomonadati</taxon>
        <taxon>Pseudomonadota</taxon>
        <taxon>Gammaproteobacteria</taxon>
        <taxon>Enterobacterales</taxon>
        <taxon>Enterobacteriaceae</taxon>
        <taxon>Escherichia</taxon>
    </lineage>
</organism>
<reference key="1">
    <citation type="submission" date="2008-02" db="EMBL/GenBank/DDBJ databases">
        <title>Complete sequence of Escherichia coli C str. ATCC 8739.</title>
        <authorList>
            <person name="Copeland A."/>
            <person name="Lucas S."/>
            <person name="Lapidus A."/>
            <person name="Glavina del Rio T."/>
            <person name="Dalin E."/>
            <person name="Tice H."/>
            <person name="Bruce D."/>
            <person name="Goodwin L."/>
            <person name="Pitluck S."/>
            <person name="Kiss H."/>
            <person name="Brettin T."/>
            <person name="Detter J.C."/>
            <person name="Han C."/>
            <person name="Kuske C.R."/>
            <person name="Schmutz J."/>
            <person name="Larimer F."/>
            <person name="Land M."/>
            <person name="Hauser L."/>
            <person name="Kyrpides N."/>
            <person name="Mikhailova N."/>
            <person name="Ingram L."/>
            <person name="Richardson P."/>
        </authorList>
    </citation>
    <scope>NUCLEOTIDE SEQUENCE [LARGE SCALE GENOMIC DNA]</scope>
    <source>
        <strain>ATCC 8739 / DSM 1576 / NBRC 3972 / NCIMB 8545 / WDCM 00012 / Crooks</strain>
    </source>
</reference>
<gene>
    <name evidence="1" type="primary">frr</name>
    <name type="ordered locus">EcolC_3488</name>
</gene>
<sequence length="185" mass="20639">MISDIRKDAEVRMDKCVEAFKTQISKIRTGRASPSLLDGIVVEYYGTPTPLRQLASVTVEDSRTLKINVFDRSMSPAVEKAIMASDLGLNPNSAGSDIRVPLPPLTEERRKDLTKIVRGEAEQARVAVRNVRRDANDKVKALLKDKEISEDDDRRSQDDVQKLTDAAIKKIEAALADKEAELMQF</sequence>
<protein>
    <recommendedName>
        <fullName evidence="1">Ribosome-recycling factor</fullName>
        <shortName evidence="1">RRF</shortName>
    </recommendedName>
    <alternativeName>
        <fullName evidence="1">Ribosome-releasing factor</fullName>
    </alternativeName>
</protein>
<keyword id="KW-0007">Acetylation</keyword>
<keyword id="KW-0963">Cytoplasm</keyword>
<keyword id="KW-0648">Protein biosynthesis</keyword>
<accession>B1IQG9</accession>
<evidence type="ECO:0000255" key="1">
    <source>
        <dbReference type="HAMAP-Rule" id="MF_00040"/>
    </source>
</evidence>
<comment type="function">
    <text evidence="1">Responsible for the release of ribosomes from messenger RNA at the termination of protein biosynthesis. May increase the efficiency of translation by recycling ribosomes from one round of translation to another.</text>
</comment>
<comment type="subcellular location">
    <subcellularLocation>
        <location evidence="1">Cytoplasm</location>
    </subcellularLocation>
</comment>
<comment type="similarity">
    <text evidence="1">Belongs to the RRF family.</text>
</comment>
<feature type="chain" id="PRO_1000074579" description="Ribosome-recycling factor">
    <location>
        <begin position="1"/>
        <end position="185"/>
    </location>
</feature>
<feature type="modified residue" description="N6-acetyllysine" evidence="1">
    <location>
        <position position="162"/>
    </location>
</feature>